<evidence type="ECO:0000250" key="1"/>
<evidence type="ECO:0000255" key="2"/>
<evidence type="ECO:0000269" key="3">
    <source>
    </source>
</evidence>
<evidence type="ECO:0000269" key="4">
    <source>
    </source>
</evidence>
<evidence type="ECO:0000269" key="5">
    <source>
    </source>
</evidence>
<evidence type="ECO:0000269" key="6">
    <source>
    </source>
</evidence>
<evidence type="ECO:0000269" key="7">
    <source>
    </source>
</evidence>
<evidence type="ECO:0000303" key="8">
    <source>
    </source>
</evidence>
<evidence type="ECO:0000303" key="9">
    <source ref="2"/>
</evidence>
<evidence type="ECO:0000305" key="10"/>
<evidence type="ECO:0000312" key="11">
    <source>
        <dbReference type="EMBL" id="AAI00841.1"/>
    </source>
</evidence>
<evidence type="ECO:0000312" key="12">
    <source>
        <dbReference type="EMBL" id="AAN77128.1"/>
    </source>
</evidence>
<evidence type="ECO:0000312" key="13">
    <source>
        <dbReference type="EMBL" id="AAP30874.1"/>
    </source>
</evidence>
<evidence type="ECO:0000312" key="14">
    <source>
        <dbReference type="EMBL" id="AAS46596.1"/>
    </source>
</evidence>
<evidence type="ECO:0000312" key="15">
    <source>
        <dbReference type="HGNC" id="HGNC:16641"/>
    </source>
</evidence>
<evidence type="ECO:0007829" key="16">
    <source>
        <dbReference type="PDB" id="2MOC"/>
    </source>
</evidence>
<keyword id="KW-0002">3D-structure</keyword>
<keyword id="KW-0025">Alternative splicing</keyword>
<keyword id="KW-0027">Amidation</keyword>
<keyword id="KW-0165">Cleavage on pair of basic residues</keyword>
<keyword id="KW-0382">Hypotensive agent</keyword>
<keyword id="KW-1185">Reference proteome</keyword>
<keyword id="KW-0964">Secreted</keyword>
<keyword id="KW-0732">Signal</keyword>
<organism>
    <name type="scientific">Homo sapiens</name>
    <name type="common">Human</name>
    <dbReference type="NCBI Taxonomy" id="9606"/>
    <lineage>
        <taxon>Eukaryota</taxon>
        <taxon>Metazoa</taxon>
        <taxon>Chordata</taxon>
        <taxon>Craniata</taxon>
        <taxon>Vertebrata</taxon>
        <taxon>Euteleostomi</taxon>
        <taxon>Mammalia</taxon>
        <taxon>Eutheria</taxon>
        <taxon>Euarchontoglires</taxon>
        <taxon>Primates</taxon>
        <taxon>Haplorrhini</taxon>
        <taxon>Catarrhini</taxon>
        <taxon>Hominidae</taxon>
        <taxon>Homo</taxon>
    </lineage>
</organism>
<proteinExistence type="evidence at protein level"/>
<accession>Q86UU9</accession>
<accession>Q2M2P1</accession>
<accession>Q6ECK8</accession>
<accession>Q86UU6</accession>
<accession>Q86UU7</accession>
<accession>Q86UU8</accession>
<accession>Q8IWZ7</accession>
<name>TKN4_HUMAN</name>
<reference evidence="10 13" key="1">
    <citation type="journal article" date="2003" name="Proc. Natl. Acad. Sci. U.S.A.">
        <title>Characterization of the endokinins: human tachykinins with cardiovascular activity.</title>
        <authorList>
            <person name="Page N.M."/>
            <person name="Bell N.J."/>
            <person name="Gardiner S.M."/>
            <person name="Manyonda I.T."/>
            <person name="Brayley K.J."/>
            <person name="Strange P.G."/>
            <person name="Lowry P.J."/>
        </authorList>
    </citation>
    <scope>NUCLEOTIDE SEQUENCE [MRNA] (ISOFORMS 1; 2; 3 AND 4)</scope>
    <scope>FUNCTION</scope>
    <scope>TISSUE SPECIFICITY</scope>
    <scope>AMIDATION AT MET-67 AND LEU-95</scope>
</reference>
<reference evidence="10 14" key="2">
    <citation type="submission" date="2003-11" db="EMBL/GenBank/DDBJ databases">
        <authorList>
            <person name="Page N.M."/>
        </authorList>
    </citation>
    <scope>NUCLEOTIDE SEQUENCE [MRNA] (ISOFORM 5)</scope>
</reference>
<reference evidence="10 14" key="3">
    <citation type="submission" date="2005-09" db="EMBL/GenBank/DDBJ databases">
        <authorList>
            <person name="Mural R.J."/>
            <person name="Istrail S."/>
            <person name="Sutton G.G."/>
            <person name="Florea L."/>
            <person name="Halpern A.L."/>
            <person name="Mobarry C.M."/>
            <person name="Lippert R."/>
            <person name="Walenz B."/>
            <person name="Shatkay H."/>
            <person name="Dew I."/>
            <person name="Miller J.R."/>
            <person name="Flanigan M.J."/>
            <person name="Edwards N.J."/>
            <person name="Bolanos R."/>
            <person name="Fasulo D."/>
            <person name="Halldorsson B.V."/>
            <person name="Hannenhalli S."/>
            <person name="Turner R."/>
            <person name="Yooseph S."/>
            <person name="Lu F."/>
            <person name="Nusskern D.R."/>
            <person name="Shue B.C."/>
            <person name="Zheng X.H."/>
            <person name="Zhong F."/>
            <person name="Delcher A.L."/>
            <person name="Huson D.H."/>
            <person name="Kravitz S.A."/>
            <person name="Mouchard L."/>
            <person name="Reinert K."/>
            <person name="Remington K.A."/>
            <person name="Clark A.G."/>
            <person name="Waterman M.S."/>
            <person name="Eichler E.E."/>
            <person name="Adams M.D."/>
            <person name="Hunkapiller M.W."/>
            <person name="Myers E.W."/>
            <person name="Venter J.C."/>
        </authorList>
    </citation>
    <scope>NUCLEOTIDE SEQUENCE [LARGE SCALE GENOMIC DNA]</scope>
</reference>
<reference evidence="10 12" key="4">
    <citation type="journal article" date="2002" name="Gene">
        <title>Identification, localization and receptor characterization of novel mammalian substance P-like peptides.</title>
        <authorList>
            <person name="Kurtz M.M."/>
            <person name="Wang R."/>
            <person name="Clements M.K."/>
            <person name="Cascieri M.A."/>
            <person name="Austin C.P."/>
            <person name="Cunningham B.R."/>
            <person name="Chicchi G.G."/>
            <person name="Liu Q."/>
        </authorList>
    </citation>
    <scope>NUCLEOTIDE SEQUENCE [MRNA] OF 1-72 (ISOFORM 1)</scope>
</reference>
<reference evidence="10 11" key="5">
    <citation type="journal article" date="2004" name="Genome Res.">
        <title>The status, quality, and expansion of the NIH full-length cDNA project: the Mammalian Gene Collection (MGC).</title>
        <authorList>
            <consortium name="The MGC Project Team"/>
        </authorList>
    </citation>
    <scope>NUCLEOTIDE SEQUENCE [LARGE SCALE MRNA] OF 1-72 (ISOFORMS 2/3/4/5)</scope>
</reference>
<reference evidence="10" key="6">
    <citation type="journal article" date="2003" name="Br. J. Pharmacol.">
        <title>Tachykinins and tachykinin receptors in human uterus.</title>
        <authorList>
            <person name="Patak E."/>
            <person name="Candenas M.L."/>
            <person name="Pennefather J.N."/>
            <person name="Ziccone S."/>
            <person name="Lilley A."/>
            <person name="Martin J.D."/>
            <person name="Flores C."/>
            <person name="Mantecon A.G."/>
            <person name="Story M.E."/>
            <person name="Pinto F.M."/>
        </authorList>
    </citation>
    <scope>TISSUE SPECIFICITY</scope>
</reference>
<reference evidence="10" key="7">
    <citation type="journal article" date="2006" name="Neurosci. Lett.">
        <title>Intrathecal administration of the common carboxyl-terminal decapeptide in endokinin A and endokinin B evokes scratching behavior and thermal hyperalgesia in the rat.</title>
        <authorList>
            <person name="Yoshioka D."/>
            <person name="Takebuchi F."/>
            <person name="Nishimori T."/>
            <person name="Naono R."/>
            <person name="Ikeda T."/>
            <person name="Nakayama T."/>
        </authorList>
    </citation>
    <scope>FUNCTION</scope>
</reference>
<reference evidence="10" key="8">
    <citation type="journal article" date="2007" name="Brain Res.">
        <title>Leucine at the carboxyl-terminal of endokinins C and D contributes to elicitation of the antagonistic effect on substance P in rat pain processing.</title>
        <authorList>
            <person name="Naono R."/>
            <person name="Nakayama T."/>
            <person name="Ikeda T."/>
            <person name="Matsushima O."/>
            <person name="Nishimori T."/>
        </authorList>
    </citation>
    <scope>FUNCTION</scope>
</reference>
<reference evidence="10" key="9">
    <citation type="journal article" date="2007" name="Hum. Reprod.">
        <title>A role for tachykinins in the regulation of human sperm motility.</title>
        <authorList>
            <person name="Ravina C.G."/>
            <person name="Seda M."/>
            <person name="Pinto F.M."/>
            <person name="Orea A."/>
            <person name="Fernandez-Sanchez M."/>
            <person name="Pintado C.O."/>
            <person name="Candenas M.L."/>
        </authorList>
    </citation>
    <scope>FUNCTION</scope>
</reference>
<comment type="function">
    <text evidence="3 5 6 7">Tachykinins are active peptides which excite neurons, evoke behavioral responses, are potent vasodilators and secretagogues, and contract (directly or indirectly) many smooth muscles. Endokinin-A induces thermal hyperalgesia and pain-related behavior such as scratching following intrathecal administration in rats. These effects are suppressed by treatment with endokinin-C. Endokinin-A/B reduces arterial blood pressure and increases sperm motility.</text>
</comment>
<comment type="subcellular location">
    <subcellularLocation>
        <location evidence="10">Secreted</location>
    </subcellularLocation>
</comment>
<comment type="alternative products">
    <event type="alternative splicing"/>
    <isoform>
        <id>Q86UU9-1</id>
        <name evidence="3">1</name>
        <name evidence="3">Alpha</name>
        <sequence type="displayed"/>
    </isoform>
    <isoform>
        <id>Q86UU9-2</id>
        <name evidence="3">2</name>
        <name evidence="3">Beta</name>
        <sequence type="described" ref="VSP_052676 VSP_052677"/>
    </isoform>
    <isoform>
        <id>Q86UU9-3</id>
        <name evidence="3">3</name>
        <name evidence="3">Gamma</name>
        <sequence type="described" ref="VSP_052676 VSP_052681"/>
    </isoform>
    <isoform>
        <id>Q86UU9-4</id>
        <name evidence="3">4</name>
        <name evidence="3">Delta</name>
        <sequence type="described" ref="VSP_052676 VSP_052680"/>
    </isoform>
    <isoform>
        <id>Q86UU9-5</id>
        <name>5</name>
        <sequence type="described" ref="VSP_052676"/>
    </isoform>
</comment>
<comment type="tissue specificity">
    <text evidence="3 4">Expressed at low levels in the uterus of both pregnant and non-pregnant women. Isoform 1 is found only in the adrenal gland and fetal liver. Isoform 2 is found in heart, liver, bone marrow, prostate, adrenal gland and testis. Isoform 3 and isoform 4 are expressed predominantly in adrenal gland and placenta.</text>
</comment>
<comment type="similarity">
    <text evidence="2">Belongs to the tachykinin family.</text>
</comment>
<comment type="sequence caution" evidence="10">
    <conflict type="miscellaneous discrepancy">
        <sequence resource="EMBL-CDS" id="AAI00841"/>
    </conflict>
    <text>Intron retention.</text>
</comment>
<comment type="sequence caution" evidence="10">
    <conflict type="miscellaneous discrepancy">
        <sequence resource="EMBL-CDS" id="AAI00843"/>
    </conflict>
    <text>Intron retention.</text>
</comment>
<comment type="sequence caution" evidence="10">
    <conflict type="miscellaneous discrepancy">
        <sequence resource="EMBL-CDS" id="AAI00844"/>
    </conflict>
    <text>Intron retention.</text>
</comment>
<comment type="sequence caution" evidence="10">
    <conflict type="miscellaneous discrepancy">
        <sequence resource="EMBL-CDS" id="AAN77128"/>
    </conflict>
    <text>Intron retention.</text>
</comment>
<comment type="sequence caution" evidence="10">
    <conflict type="erroneous gene model prediction">
        <sequence resource="EMBL-CDS" id="EAW94657"/>
    </conflict>
</comment>
<feature type="signal peptide" evidence="2">
    <location>
        <begin position="1"/>
        <end position="20"/>
    </location>
</feature>
<feature type="peptide" id="PRO_5000063346" description="Endokinin-A">
    <location>
        <begin position="21"/>
        <end position="67"/>
    </location>
</feature>
<feature type="peptide" id="PRO_0000320011" description="Endokinin-A/B">
    <location>
        <begin position="58"/>
        <end position="67"/>
    </location>
</feature>
<feature type="propeptide" id="PRO_0000320012" evidence="1">
    <location>
        <begin position="71"/>
        <end position="79"/>
    </location>
</feature>
<feature type="peptide" id="PRO_5000063347" description="Endokinin-C">
    <location>
        <begin position="82"/>
        <end position="95"/>
    </location>
</feature>
<feature type="propeptide" id="PRO_0000320013" evidence="1">
    <location>
        <begin position="98"/>
        <end position="113"/>
    </location>
</feature>
<feature type="modified residue" description="Methionine amide" evidence="2 8">
    <location>
        <position position="67"/>
    </location>
</feature>
<feature type="modified residue" description="Leucine amide" evidence="2 8">
    <location>
        <position position="95"/>
    </location>
</feature>
<feature type="splice variant" id="VSP_052676" description="In isoform 2, isoform 3, isoform 4 and isoform 5." evidence="8 9">
    <location>
        <begin position="36"/>
        <end position="41"/>
    </location>
</feature>
<feature type="splice variant" id="VSP_052677" description="In isoform 2." evidence="8">
    <location>
        <begin position="73"/>
        <end position="83"/>
    </location>
</feature>
<feature type="splice variant" id="VSP_052680" description="In isoform 4." evidence="8">
    <location>
        <begin position="75"/>
        <end position="105"/>
    </location>
</feature>
<feature type="splice variant" id="VSP_052681" description="In isoform 3." evidence="8">
    <location>
        <begin position="84"/>
        <end position="103"/>
    </location>
</feature>
<feature type="helix" evidence="16">
    <location>
        <begin position="59"/>
        <end position="61"/>
    </location>
</feature>
<feature type="helix" evidence="16">
    <location>
        <begin position="62"/>
        <end position="66"/>
    </location>
</feature>
<gene>
    <name evidence="15" type="primary">TAC4</name>
</gene>
<protein>
    <recommendedName>
        <fullName>Tachykinin-4</fullName>
    </recommendedName>
    <alternativeName>
        <fullName>Preprotachykinin-C</fullName>
        <shortName>PPT-C</shortName>
    </alternativeName>
    <component>
        <recommendedName>
            <fullName>Endokinin-A</fullName>
            <shortName>EKA</shortName>
        </recommendedName>
    </component>
    <component>
        <recommendedName>
            <fullName>Endokinin-A/B</fullName>
            <shortName>EKA/B</shortName>
        </recommendedName>
    </component>
    <component>
        <recommendedName>
            <fullName>Endokinin-C</fullName>
            <shortName>EKC</shortName>
        </recommendedName>
    </component>
</protein>
<dbReference type="EMBL" id="AF515828">
    <property type="protein sequence ID" value="AAP30874.1"/>
    <property type="molecule type" value="mRNA"/>
</dbReference>
<dbReference type="EMBL" id="AF515829">
    <property type="protein sequence ID" value="AAP30875.1"/>
    <property type="molecule type" value="mRNA"/>
</dbReference>
<dbReference type="EMBL" id="AF515830">
    <property type="protein sequence ID" value="AAP30876.1"/>
    <property type="molecule type" value="mRNA"/>
</dbReference>
<dbReference type="EMBL" id="AF515831">
    <property type="protein sequence ID" value="AAP30877.1"/>
    <property type="molecule type" value="mRNA"/>
</dbReference>
<dbReference type="EMBL" id="AY471574">
    <property type="protein sequence ID" value="AAS46596.1"/>
    <property type="molecule type" value="mRNA"/>
</dbReference>
<dbReference type="EMBL" id="CH471109">
    <property type="protein sequence ID" value="EAW94657.1"/>
    <property type="status" value="ALT_SEQ"/>
    <property type="molecule type" value="Genomic_DNA"/>
</dbReference>
<dbReference type="EMBL" id="AF521560">
    <property type="protein sequence ID" value="AAN77128.1"/>
    <property type="status" value="ALT_SEQ"/>
    <property type="molecule type" value="mRNA"/>
</dbReference>
<dbReference type="EMBL" id="BC100840">
    <property type="protein sequence ID" value="AAI00841.1"/>
    <property type="status" value="ALT_SEQ"/>
    <property type="molecule type" value="mRNA"/>
</dbReference>
<dbReference type="EMBL" id="BC100842">
    <property type="protein sequence ID" value="AAI00843.1"/>
    <property type="status" value="ALT_SEQ"/>
    <property type="molecule type" value="mRNA"/>
</dbReference>
<dbReference type="EMBL" id="BC100843">
    <property type="protein sequence ID" value="AAI00844.1"/>
    <property type="status" value="ALT_SEQ"/>
    <property type="molecule type" value="mRNA"/>
</dbReference>
<dbReference type="CCDS" id="CCDS42357.1">
    <molecule id="Q86UU9-1"/>
</dbReference>
<dbReference type="CCDS" id="CCDS42358.1">
    <molecule id="Q86UU9-4"/>
</dbReference>
<dbReference type="CCDS" id="CCDS42359.1">
    <molecule id="Q86UU9-2"/>
</dbReference>
<dbReference type="CCDS" id="CCDS42360.1">
    <molecule id="Q86UU9-3"/>
</dbReference>
<dbReference type="CCDS" id="CCDS45727.1">
    <molecule id="Q86UU9-5"/>
</dbReference>
<dbReference type="RefSeq" id="NP_001070971.1">
    <molecule id="Q86UU9-2"/>
    <property type="nucleotide sequence ID" value="NM_001077503.2"/>
</dbReference>
<dbReference type="RefSeq" id="NP_001070972.1">
    <molecule id="Q86UU9-3"/>
    <property type="nucleotide sequence ID" value="NM_001077504.2"/>
</dbReference>
<dbReference type="RefSeq" id="NP_001070973.1">
    <molecule id="Q86UU9-4"/>
    <property type="nucleotide sequence ID" value="NM_001077505.2"/>
</dbReference>
<dbReference type="RefSeq" id="NP_001070974.1">
    <molecule id="Q86UU9-5"/>
    <property type="nucleotide sequence ID" value="NM_001077506.2"/>
</dbReference>
<dbReference type="RefSeq" id="NP_733786.2">
    <molecule id="Q86UU9-1"/>
    <property type="nucleotide sequence ID" value="NM_170685.3"/>
</dbReference>
<dbReference type="PDB" id="2MOC">
    <property type="method" value="NMR"/>
    <property type="chains" value="A=57-67"/>
</dbReference>
<dbReference type="PDBsum" id="2MOC"/>
<dbReference type="SMR" id="Q86UU9"/>
<dbReference type="BioGRID" id="129073">
    <property type="interactions" value="4"/>
</dbReference>
<dbReference type="FunCoup" id="Q86UU9">
    <property type="interactions" value="479"/>
</dbReference>
<dbReference type="STRING" id="9606.ENSP00000334042"/>
<dbReference type="BioMuta" id="TAC4"/>
<dbReference type="DMDM" id="74723510"/>
<dbReference type="MassIVE" id="Q86UU9"/>
<dbReference type="PaxDb" id="9606-ENSP00000334042"/>
<dbReference type="ProteomicsDB" id="69900">
    <molecule id="Q86UU9-1"/>
</dbReference>
<dbReference type="ProteomicsDB" id="69902">
    <molecule id="Q86UU9-3"/>
</dbReference>
<dbReference type="ProteomicsDB" id="69904">
    <molecule id="Q86UU9-5"/>
</dbReference>
<dbReference type="Antibodypedia" id="68331">
    <property type="antibodies" value="58 antibodies from 11 providers"/>
</dbReference>
<dbReference type="DNASU" id="255061"/>
<dbReference type="Ensembl" id="ENST00000326219.5">
    <molecule id="Q86UU9-3"/>
    <property type="protein sequence ID" value="ENSP00000325286.5"/>
    <property type="gene ID" value="ENSG00000176358.16"/>
</dbReference>
<dbReference type="Ensembl" id="ENST00000334568.8">
    <molecule id="Q86UU9-1"/>
    <property type="protein sequence ID" value="ENSP00000334042.4"/>
    <property type="gene ID" value="ENSG00000176358.16"/>
</dbReference>
<dbReference type="Ensembl" id="ENST00000352793.6">
    <molecule id="Q86UU9-4"/>
    <property type="protein sequence ID" value="ENSP00000340461.2"/>
    <property type="gene ID" value="ENSG00000176358.16"/>
</dbReference>
<dbReference type="Ensembl" id="ENST00000398154.5">
    <molecule id="Q86UU9-2"/>
    <property type="protein sequence ID" value="ENSP00000381221.1"/>
    <property type="gene ID" value="ENSG00000176358.16"/>
</dbReference>
<dbReference type="Ensembl" id="ENST00000436235.6">
    <molecule id="Q86UU9-5"/>
    <property type="protein sequence ID" value="ENSP00000399702.1"/>
    <property type="gene ID" value="ENSG00000176358.16"/>
</dbReference>
<dbReference type="GeneID" id="255061"/>
<dbReference type="KEGG" id="hsa:255061"/>
<dbReference type="MANE-Select" id="ENST00000436235.6">
    <molecule id="Q86UU9-5"/>
    <property type="protein sequence ID" value="ENSP00000399702.1"/>
    <property type="RefSeq nucleotide sequence ID" value="NM_001077506.2"/>
    <property type="RefSeq protein sequence ID" value="NP_001070974.1"/>
</dbReference>
<dbReference type="UCSC" id="uc002ipo.1">
    <molecule id="Q86UU9-1"/>
    <property type="organism name" value="human"/>
</dbReference>
<dbReference type="AGR" id="HGNC:16641"/>
<dbReference type="CTD" id="255061"/>
<dbReference type="DisGeNET" id="255061"/>
<dbReference type="GeneCards" id="TAC4"/>
<dbReference type="HGNC" id="HGNC:16641">
    <property type="gene designation" value="TAC4"/>
</dbReference>
<dbReference type="HPA" id="ENSG00000176358">
    <property type="expression patterns" value="Tissue enhanced (choroid plexus, pituitary gland)"/>
</dbReference>
<dbReference type="MIM" id="607833">
    <property type="type" value="gene"/>
</dbReference>
<dbReference type="neXtProt" id="NX_Q86UU9"/>
<dbReference type="OpenTargets" id="ENSG00000176358"/>
<dbReference type="PharmGKB" id="PA134944925"/>
<dbReference type="VEuPathDB" id="HostDB:ENSG00000176358"/>
<dbReference type="eggNOG" id="ENOG502TEEE">
    <property type="taxonomic scope" value="Eukaryota"/>
</dbReference>
<dbReference type="GeneTree" id="ENSGT00390000015220"/>
<dbReference type="HOGENOM" id="CLU_2677305_0_0_1"/>
<dbReference type="InParanoid" id="Q86UU9"/>
<dbReference type="OMA" id="EAESWVT"/>
<dbReference type="OrthoDB" id="9538060at2759"/>
<dbReference type="PAN-GO" id="Q86UU9">
    <property type="GO annotations" value="5 GO annotations based on evolutionary models"/>
</dbReference>
<dbReference type="PhylomeDB" id="Q86UU9"/>
<dbReference type="TreeFam" id="TF338519"/>
<dbReference type="PathwayCommons" id="Q86UU9"/>
<dbReference type="SignaLink" id="Q86UU9"/>
<dbReference type="BioGRID-ORCS" id="255061">
    <property type="hits" value="24 hits in 1135 CRISPR screens"/>
</dbReference>
<dbReference type="EvolutionaryTrace" id="Q86UU9"/>
<dbReference type="GeneWiki" id="TAC4"/>
<dbReference type="GenomeRNAi" id="255061"/>
<dbReference type="Pharos" id="Q86UU9">
    <property type="development level" value="Tbio"/>
</dbReference>
<dbReference type="PRO" id="PR:Q86UU9"/>
<dbReference type="Proteomes" id="UP000005640">
    <property type="component" value="Chromosome 17"/>
</dbReference>
<dbReference type="RNAct" id="Q86UU9">
    <property type="molecule type" value="protein"/>
</dbReference>
<dbReference type="Bgee" id="ENSG00000176358">
    <property type="expression patterns" value="Expressed in tendon of biceps brachii and 122 other cell types or tissues"/>
</dbReference>
<dbReference type="ExpressionAtlas" id="Q86UU9">
    <property type="expression patterns" value="baseline and differential"/>
</dbReference>
<dbReference type="GO" id="GO:0005615">
    <property type="term" value="C:extracellular space"/>
    <property type="evidence" value="ECO:0000314"/>
    <property type="project" value="UniProtKB"/>
</dbReference>
<dbReference type="GO" id="GO:0048018">
    <property type="term" value="F:receptor ligand activity"/>
    <property type="evidence" value="ECO:0000314"/>
    <property type="project" value="UniProtKB"/>
</dbReference>
<dbReference type="GO" id="GO:0031837">
    <property type="term" value="F:substance K receptor binding"/>
    <property type="evidence" value="ECO:0000353"/>
    <property type="project" value="UniProtKB"/>
</dbReference>
<dbReference type="GO" id="GO:0031835">
    <property type="term" value="F:substance P receptor binding"/>
    <property type="evidence" value="ECO:0000353"/>
    <property type="project" value="UniProtKB"/>
</dbReference>
<dbReference type="GO" id="GO:0050965">
    <property type="term" value="P:detection of temperature stimulus involved in sensory perception of pain"/>
    <property type="evidence" value="ECO:0000314"/>
    <property type="project" value="UniProtKB"/>
</dbReference>
<dbReference type="GO" id="GO:0006954">
    <property type="term" value="P:inflammatory response"/>
    <property type="evidence" value="ECO:0000318"/>
    <property type="project" value="GO_Central"/>
</dbReference>
<dbReference type="GO" id="GO:1904057">
    <property type="term" value="P:negative regulation of sensory perception of pain"/>
    <property type="evidence" value="ECO:0000314"/>
    <property type="project" value="UniProtKB"/>
</dbReference>
<dbReference type="GO" id="GO:0003085">
    <property type="term" value="P:negative regulation of systemic arterial blood pressure"/>
    <property type="evidence" value="ECO:0000314"/>
    <property type="project" value="UniProtKB"/>
</dbReference>
<dbReference type="GO" id="GO:0007204">
    <property type="term" value="P:positive regulation of cytosolic calcium ion concentration"/>
    <property type="evidence" value="ECO:0000314"/>
    <property type="project" value="UniProtKB"/>
</dbReference>
<dbReference type="GO" id="GO:1902093">
    <property type="term" value="P:positive regulation of flagellated sperm motility"/>
    <property type="evidence" value="ECO:0000314"/>
    <property type="project" value="UniProtKB"/>
</dbReference>
<dbReference type="GO" id="GO:0008217">
    <property type="term" value="P:regulation of blood pressure"/>
    <property type="evidence" value="ECO:0007669"/>
    <property type="project" value="UniProtKB-KW"/>
</dbReference>
<dbReference type="GO" id="GO:0051930">
    <property type="term" value="P:regulation of sensory perception of pain"/>
    <property type="evidence" value="ECO:0000314"/>
    <property type="project" value="UniProtKB"/>
</dbReference>
<dbReference type="GO" id="GO:0007217">
    <property type="term" value="P:tachykinin receptor signaling pathway"/>
    <property type="evidence" value="ECO:0000314"/>
    <property type="project" value="UniProtKB"/>
</dbReference>
<dbReference type="InterPro" id="IPR013055">
    <property type="entry name" value="Tachy_Neuro_lke_CS"/>
</dbReference>
<dbReference type="PANTHER" id="PTHR11250">
    <property type="entry name" value="TACHYKININ"/>
    <property type="match status" value="1"/>
</dbReference>
<dbReference type="PANTHER" id="PTHR11250:SF2">
    <property type="entry name" value="TACHYKININ-4"/>
    <property type="match status" value="1"/>
</dbReference>
<dbReference type="PROSITE" id="PS00267">
    <property type="entry name" value="TACHYKININ"/>
    <property type="match status" value="1"/>
</dbReference>
<sequence length="113" mass="12305">MLPCLALLLLMELSVCTVAGDGGEEQTLSTEAETWVIVALEEGAGPSIQLQLQEVKTGKASQFFGLMGKRVGGRPLIQPRRKKAYQLEHTFQGLLGKRSLFTEGREDEAQGSE</sequence>